<feature type="chain" id="PRO_0000141399" description="Aspartate-semialdehyde dehydrogenase">
    <location>
        <begin position="1"/>
        <end position="357"/>
    </location>
</feature>
<feature type="active site" description="Acyl-thioester intermediate" evidence="3">
    <location>
        <position position="151"/>
    </location>
</feature>
<feature type="active site" description="Proton acceptor" evidence="3">
    <location>
        <position position="247"/>
    </location>
</feature>
<feature type="binding site" evidence="5">
    <location>
        <position position="12"/>
    </location>
    <ligand>
        <name>NADP(+)</name>
        <dbReference type="ChEBI" id="CHEBI:58349"/>
    </ligand>
</feature>
<feature type="binding site" evidence="5">
    <location>
        <position position="13"/>
    </location>
    <ligand>
        <name>NADP(+)</name>
        <dbReference type="ChEBI" id="CHEBI:58349"/>
    </ligand>
</feature>
<feature type="binding site" evidence="5">
    <location>
        <position position="14"/>
    </location>
    <ligand>
        <name>NADP(+)</name>
        <dbReference type="ChEBI" id="CHEBI:58349"/>
    </ligand>
</feature>
<feature type="binding site" evidence="2">
    <location>
        <position position="15"/>
    </location>
    <ligand>
        <name>NADP(+)</name>
        <dbReference type="ChEBI" id="CHEBI:58349"/>
    </ligand>
</feature>
<feature type="binding site" evidence="5">
    <location>
        <position position="37"/>
    </location>
    <ligand>
        <name>NADP(+)</name>
        <dbReference type="ChEBI" id="CHEBI:58349"/>
    </ligand>
</feature>
<feature type="binding site" evidence="5">
    <location>
        <position position="40"/>
    </location>
    <ligand>
        <name>NADP(+)</name>
        <dbReference type="ChEBI" id="CHEBI:58349"/>
    </ligand>
</feature>
<feature type="binding site" evidence="1">
    <location>
        <position position="84"/>
    </location>
    <ligand>
        <name>NADP(+)</name>
        <dbReference type="ChEBI" id="CHEBI:58349"/>
    </ligand>
</feature>
<feature type="binding site" evidence="1">
    <location>
        <position position="85"/>
    </location>
    <ligand>
        <name>NADP(+)</name>
        <dbReference type="ChEBI" id="CHEBI:58349"/>
    </ligand>
</feature>
<feature type="binding site" evidence="1">
    <location>
        <position position="183"/>
    </location>
    <ligand>
        <name>NADP(+)</name>
        <dbReference type="ChEBI" id="CHEBI:58349"/>
    </ligand>
</feature>
<feature type="binding site" evidence="2">
    <location>
        <position position="335"/>
    </location>
    <ligand>
        <name>NADP(+)</name>
        <dbReference type="ChEBI" id="CHEBI:58349"/>
    </ligand>
</feature>
<feature type="modified residue" description="Phosphoserine" evidence="7">
    <location>
        <position position="323"/>
    </location>
</feature>
<gene>
    <name evidence="9" type="primary">hom2</name>
    <name type="ORF">SPCC1827.06c</name>
</gene>
<keyword id="KW-0028">Amino-acid biosynthesis</keyword>
<keyword id="KW-0963">Cytoplasm</keyword>
<keyword id="KW-0486">Methionine biosynthesis</keyword>
<keyword id="KW-0521">NADP</keyword>
<keyword id="KW-0539">Nucleus</keyword>
<keyword id="KW-0560">Oxidoreductase</keyword>
<keyword id="KW-0597">Phosphoprotein</keyword>
<keyword id="KW-1185">Reference proteome</keyword>
<keyword id="KW-0791">Threonine biosynthesis</keyword>
<accession>P78780</accession>
<dbReference type="EC" id="1.2.1.11" evidence="4"/>
<dbReference type="EMBL" id="CU329672">
    <property type="protein sequence ID" value="CAA19314.1"/>
    <property type="molecule type" value="Genomic_DNA"/>
</dbReference>
<dbReference type="EMBL" id="D89129">
    <property type="protein sequence ID" value="BAA13791.1"/>
    <property type="molecule type" value="mRNA"/>
</dbReference>
<dbReference type="PIR" id="T41167">
    <property type="entry name" value="T41167"/>
</dbReference>
<dbReference type="PIR" id="T42373">
    <property type="entry name" value="T42373"/>
</dbReference>
<dbReference type="RefSeq" id="NP_588552.1">
    <property type="nucleotide sequence ID" value="NM_001023539.2"/>
</dbReference>
<dbReference type="SMR" id="P78780"/>
<dbReference type="BioGRID" id="275837">
    <property type="interactions" value="3"/>
</dbReference>
<dbReference type="FunCoup" id="P78780">
    <property type="interactions" value="250"/>
</dbReference>
<dbReference type="IntAct" id="P78780">
    <property type="interactions" value="1"/>
</dbReference>
<dbReference type="STRING" id="284812.P78780"/>
<dbReference type="iPTMnet" id="P78780"/>
<dbReference type="PaxDb" id="4896-SPCC1827.06c.1"/>
<dbReference type="EnsemblFungi" id="SPCC1827.06c.1">
    <property type="protein sequence ID" value="SPCC1827.06c.1:pep"/>
    <property type="gene ID" value="SPCC1827.06c"/>
</dbReference>
<dbReference type="GeneID" id="2539267"/>
<dbReference type="KEGG" id="spo:2539267"/>
<dbReference type="PomBase" id="SPCC1827.06c"/>
<dbReference type="VEuPathDB" id="FungiDB:SPCC1827.06c"/>
<dbReference type="eggNOG" id="KOG4777">
    <property type="taxonomic scope" value="Eukaryota"/>
</dbReference>
<dbReference type="HOGENOM" id="CLU_049966_1_0_1"/>
<dbReference type="InParanoid" id="P78780"/>
<dbReference type="OMA" id="CEEEMKM"/>
<dbReference type="PhylomeDB" id="P78780"/>
<dbReference type="UniPathway" id="UPA00050">
    <property type="reaction ID" value="UER00463"/>
</dbReference>
<dbReference type="UniPathway" id="UPA00051">
    <property type="reaction ID" value="UER00464"/>
</dbReference>
<dbReference type="PRO" id="PR:P78780"/>
<dbReference type="Proteomes" id="UP000002485">
    <property type="component" value="Chromosome III"/>
</dbReference>
<dbReference type="GO" id="GO:0005737">
    <property type="term" value="C:cytoplasm"/>
    <property type="evidence" value="ECO:0007005"/>
    <property type="project" value="PomBase"/>
</dbReference>
<dbReference type="GO" id="GO:0005829">
    <property type="term" value="C:cytosol"/>
    <property type="evidence" value="ECO:0007005"/>
    <property type="project" value="PomBase"/>
</dbReference>
<dbReference type="GO" id="GO:0005634">
    <property type="term" value="C:nucleus"/>
    <property type="evidence" value="ECO:0007005"/>
    <property type="project" value="PomBase"/>
</dbReference>
<dbReference type="GO" id="GO:0004073">
    <property type="term" value="F:aspartate-semialdehyde dehydrogenase activity"/>
    <property type="evidence" value="ECO:0000250"/>
    <property type="project" value="PomBase"/>
</dbReference>
<dbReference type="GO" id="GO:0051287">
    <property type="term" value="F:NAD binding"/>
    <property type="evidence" value="ECO:0007669"/>
    <property type="project" value="InterPro"/>
</dbReference>
<dbReference type="GO" id="GO:0050661">
    <property type="term" value="F:NADP binding"/>
    <property type="evidence" value="ECO:0007669"/>
    <property type="project" value="InterPro"/>
</dbReference>
<dbReference type="GO" id="GO:0046983">
    <property type="term" value="F:protein dimerization activity"/>
    <property type="evidence" value="ECO:0007669"/>
    <property type="project" value="InterPro"/>
</dbReference>
<dbReference type="GO" id="GO:0009090">
    <property type="term" value="P:homoserine biosynthetic process"/>
    <property type="evidence" value="ECO:0000266"/>
    <property type="project" value="PomBase"/>
</dbReference>
<dbReference type="GO" id="GO:0009089">
    <property type="term" value="P:lysine biosynthetic process via diaminopimelate"/>
    <property type="evidence" value="ECO:0007669"/>
    <property type="project" value="UniProtKB-UniPathway"/>
</dbReference>
<dbReference type="GO" id="GO:0009086">
    <property type="term" value="P:methionine biosynthetic process"/>
    <property type="evidence" value="ECO:0000318"/>
    <property type="project" value="GO_Central"/>
</dbReference>
<dbReference type="GO" id="GO:0009088">
    <property type="term" value="P:threonine biosynthetic process"/>
    <property type="evidence" value="ECO:0000318"/>
    <property type="project" value="GO_Central"/>
</dbReference>
<dbReference type="CDD" id="cd18130">
    <property type="entry name" value="ASADH_C_arch_fung_like"/>
    <property type="match status" value="1"/>
</dbReference>
<dbReference type="CDD" id="cd02315">
    <property type="entry name" value="ScASADH_like_N"/>
    <property type="match status" value="1"/>
</dbReference>
<dbReference type="FunFam" id="3.40.50.720:FF:000200">
    <property type="entry name" value="Aspartate-semialdehyde dehydrogenase"/>
    <property type="match status" value="1"/>
</dbReference>
<dbReference type="FunFam" id="3.30.360.10:FF:000016">
    <property type="entry name" value="Probable aspartate-semialdehyde dehydrogenase"/>
    <property type="match status" value="1"/>
</dbReference>
<dbReference type="Gene3D" id="3.30.360.10">
    <property type="entry name" value="Dihydrodipicolinate Reductase, domain 2"/>
    <property type="match status" value="1"/>
</dbReference>
<dbReference type="Gene3D" id="3.40.50.720">
    <property type="entry name" value="NAD(P)-binding Rossmann-like Domain"/>
    <property type="match status" value="1"/>
</dbReference>
<dbReference type="HAMAP" id="MF_02121">
    <property type="entry name" value="ASADH"/>
    <property type="match status" value="1"/>
</dbReference>
<dbReference type="InterPro" id="IPR051823">
    <property type="entry name" value="ASADH-related"/>
</dbReference>
<dbReference type="InterPro" id="IPR005676">
    <property type="entry name" value="Asp_semi-ald_DH_pep-lack"/>
</dbReference>
<dbReference type="InterPro" id="IPR012080">
    <property type="entry name" value="Asp_semialdehyde_DH"/>
</dbReference>
<dbReference type="InterPro" id="IPR036291">
    <property type="entry name" value="NAD(P)-bd_dom_sf"/>
</dbReference>
<dbReference type="InterPro" id="IPR000534">
    <property type="entry name" value="Semialdehyde_DH_NAD-bd"/>
</dbReference>
<dbReference type="InterPro" id="IPR012280">
    <property type="entry name" value="Semialdhyde_DH_dimer_dom"/>
</dbReference>
<dbReference type="NCBIfam" id="TIGR00978">
    <property type="entry name" value="asd_EA"/>
    <property type="match status" value="1"/>
</dbReference>
<dbReference type="NCBIfam" id="NF006416">
    <property type="entry name" value="PRK08664.1"/>
    <property type="match status" value="1"/>
</dbReference>
<dbReference type="PANTHER" id="PTHR46718">
    <property type="entry name" value="ASPARTATE-SEMIALDEHYDE DEHYDROGENASE"/>
    <property type="match status" value="1"/>
</dbReference>
<dbReference type="PANTHER" id="PTHR46718:SF1">
    <property type="entry name" value="ASPARTATE-SEMIALDEHYDE DEHYDROGENASE"/>
    <property type="match status" value="1"/>
</dbReference>
<dbReference type="Pfam" id="PF01118">
    <property type="entry name" value="Semialdhyde_dh"/>
    <property type="match status" value="1"/>
</dbReference>
<dbReference type="Pfam" id="PF02774">
    <property type="entry name" value="Semialdhyde_dhC"/>
    <property type="match status" value="1"/>
</dbReference>
<dbReference type="PIRSF" id="PIRSF000148">
    <property type="entry name" value="ASA_dh"/>
    <property type="match status" value="1"/>
</dbReference>
<dbReference type="SMART" id="SM00859">
    <property type="entry name" value="Semialdhyde_dh"/>
    <property type="match status" value="1"/>
</dbReference>
<dbReference type="SUPFAM" id="SSF55347">
    <property type="entry name" value="Glyceraldehyde-3-phosphate dehydrogenase-like, C-terminal domain"/>
    <property type="match status" value="1"/>
</dbReference>
<dbReference type="SUPFAM" id="SSF51735">
    <property type="entry name" value="NAD(P)-binding Rossmann-fold domains"/>
    <property type="match status" value="1"/>
</dbReference>
<evidence type="ECO:0000250" key="1">
    <source>
        <dbReference type="UniProtKB" id="A0A080WMA9"/>
    </source>
</evidence>
<evidence type="ECO:0000250" key="2">
    <source>
        <dbReference type="UniProtKB" id="A0A179UL48"/>
    </source>
</evidence>
<evidence type="ECO:0000250" key="3">
    <source>
        <dbReference type="UniProtKB" id="P0A9Q9"/>
    </source>
</evidence>
<evidence type="ECO:0000250" key="4">
    <source>
        <dbReference type="UniProtKB" id="P13663"/>
    </source>
</evidence>
<evidence type="ECO:0000250" key="5">
    <source>
        <dbReference type="UniProtKB" id="Q5ALM0"/>
    </source>
</evidence>
<evidence type="ECO:0000269" key="6">
    <source>
    </source>
</evidence>
<evidence type="ECO:0000269" key="7">
    <source>
    </source>
</evidence>
<evidence type="ECO:0000305" key="8"/>
<evidence type="ECO:0000312" key="9">
    <source>
        <dbReference type="PomBase" id="SPCC1827.06c"/>
    </source>
</evidence>
<name>DHAS_SCHPO</name>
<reference key="1">
    <citation type="journal article" date="2002" name="Nature">
        <title>The genome sequence of Schizosaccharomyces pombe.</title>
        <authorList>
            <person name="Wood V."/>
            <person name="Gwilliam R."/>
            <person name="Rajandream M.A."/>
            <person name="Lyne M.H."/>
            <person name="Lyne R."/>
            <person name="Stewart A."/>
            <person name="Sgouros J.G."/>
            <person name="Peat N."/>
            <person name="Hayles J."/>
            <person name="Baker S.G."/>
            <person name="Basham D."/>
            <person name="Bowman S."/>
            <person name="Brooks K."/>
            <person name="Brown D."/>
            <person name="Brown S."/>
            <person name="Chillingworth T."/>
            <person name="Churcher C.M."/>
            <person name="Collins M."/>
            <person name="Connor R."/>
            <person name="Cronin A."/>
            <person name="Davis P."/>
            <person name="Feltwell T."/>
            <person name="Fraser A."/>
            <person name="Gentles S."/>
            <person name="Goble A."/>
            <person name="Hamlin N."/>
            <person name="Harris D.E."/>
            <person name="Hidalgo J."/>
            <person name="Hodgson G."/>
            <person name="Holroyd S."/>
            <person name="Hornsby T."/>
            <person name="Howarth S."/>
            <person name="Huckle E.J."/>
            <person name="Hunt S."/>
            <person name="Jagels K."/>
            <person name="James K.D."/>
            <person name="Jones L."/>
            <person name="Jones M."/>
            <person name="Leather S."/>
            <person name="McDonald S."/>
            <person name="McLean J."/>
            <person name="Mooney P."/>
            <person name="Moule S."/>
            <person name="Mungall K.L."/>
            <person name="Murphy L.D."/>
            <person name="Niblett D."/>
            <person name="Odell C."/>
            <person name="Oliver K."/>
            <person name="O'Neil S."/>
            <person name="Pearson D."/>
            <person name="Quail M.A."/>
            <person name="Rabbinowitsch E."/>
            <person name="Rutherford K.M."/>
            <person name="Rutter S."/>
            <person name="Saunders D."/>
            <person name="Seeger K."/>
            <person name="Sharp S."/>
            <person name="Skelton J."/>
            <person name="Simmonds M.N."/>
            <person name="Squares R."/>
            <person name="Squares S."/>
            <person name="Stevens K."/>
            <person name="Taylor K."/>
            <person name="Taylor R.G."/>
            <person name="Tivey A."/>
            <person name="Walsh S.V."/>
            <person name="Warren T."/>
            <person name="Whitehead S."/>
            <person name="Woodward J.R."/>
            <person name="Volckaert G."/>
            <person name="Aert R."/>
            <person name="Robben J."/>
            <person name="Grymonprez B."/>
            <person name="Weltjens I."/>
            <person name="Vanstreels E."/>
            <person name="Rieger M."/>
            <person name="Schaefer M."/>
            <person name="Mueller-Auer S."/>
            <person name="Gabel C."/>
            <person name="Fuchs M."/>
            <person name="Duesterhoeft A."/>
            <person name="Fritzc C."/>
            <person name="Holzer E."/>
            <person name="Moestl D."/>
            <person name="Hilbert H."/>
            <person name="Borzym K."/>
            <person name="Langer I."/>
            <person name="Beck A."/>
            <person name="Lehrach H."/>
            <person name="Reinhardt R."/>
            <person name="Pohl T.M."/>
            <person name="Eger P."/>
            <person name="Zimmermann W."/>
            <person name="Wedler H."/>
            <person name="Wambutt R."/>
            <person name="Purnelle B."/>
            <person name="Goffeau A."/>
            <person name="Cadieu E."/>
            <person name="Dreano S."/>
            <person name="Gloux S."/>
            <person name="Lelaure V."/>
            <person name="Mottier S."/>
            <person name="Galibert F."/>
            <person name="Aves S.J."/>
            <person name="Xiang Z."/>
            <person name="Hunt C."/>
            <person name="Moore K."/>
            <person name="Hurst S.M."/>
            <person name="Lucas M."/>
            <person name="Rochet M."/>
            <person name="Gaillardin C."/>
            <person name="Tallada V.A."/>
            <person name="Garzon A."/>
            <person name="Thode G."/>
            <person name="Daga R.R."/>
            <person name="Cruzado L."/>
            <person name="Jimenez J."/>
            <person name="Sanchez M."/>
            <person name="del Rey F."/>
            <person name="Benito J."/>
            <person name="Dominguez A."/>
            <person name="Revuelta J.L."/>
            <person name="Moreno S."/>
            <person name="Armstrong J."/>
            <person name="Forsburg S.L."/>
            <person name="Cerutti L."/>
            <person name="Lowe T."/>
            <person name="McCombie W.R."/>
            <person name="Paulsen I."/>
            <person name="Potashkin J."/>
            <person name="Shpakovski G.V."/>
            <person name="Ussery D."/>
            <person name="Barrell B.G."/>
            <person name="Nurse P."/>
        </authorList>
    </citation>
    <scope>NUCLEOTIDE SEQUENCE [LARGE SCALE GENOMIC DNA]</scope>
    <source>
        <strain>972 / ATCC 24843</strain>
    </source>
</reference>
<reference key="2">
    <citation type="journal article" date="1997" name="DNA Res.">
        <title>Identification of open reading frames in Schizosaccharomyces pombe cDNAs.</title>
        <authorList>
            <person name="Yoshioka S."/>
            <person name="Kato K."/>
            <person name="Nakai K."/>
            <person name="Okayama H."/>
            <person name="Nojima H."/>
        </authorList>
    </citation>
    <scope>NUCLEOTIDE SEQUENCE [LARGE SCALE MRNA] OF 3-357</scope>
    <source>
        <strain>PR745</strain>
    </source>
</reference>
<reference key="3">
    <citation type="journal article" date="2006" name="Nat. Biotechnol.">
        <title>ORFeome cloning and global analysis of protein localization in the fission yeast Schizosaccharomyces pombe.</title>
        <authorList>
            <person name="Matsuyama A."/>
            <person name="Arai R."/>
            <person name="Yashiroda Y."/>
            <person name="Shirai A."/>
            <person name="Kamata A."/>
            <person name="Sekido S."/>
            <person name="Kobayashi Y."/>
            <person name="Hashimoto A."/>
            <person name="Hamamoto M."/>
            <person name="Hiraoka Y."/>
            <person name="Horinouchi S."/>
            <person name="Yoshida M."/>
        </authorList>
    </citation>
    <scope>SUBCELLULAR LOCATION [LARGE SCALE ANALYSIS]</scope>
</reference>
<reference key="4">
    <citation type="journal article" date="2008" name="J. Proteome Res.">
        <title>Phosphoproteome analysis of fission yeast.</title>
        <authorList>
            <person name="Wilson-Grady J.T."/>
            <person name="Villen J."/>
            <person name="Gygi S.P."/>
        </authorList>
    </citation>
    <scope>PHOSPHORYLATION [LARGE SCALE ANALYSIS] AT SER-323</scope>
    <scope>IDENTIFICATION BY MASS SPECTROMETRY</scope>
</reference>
<organism>
    <name type="scientific">Schizosaccharomyces pombe (strain 972 / ATCC 24843)</name>
    <name type="common">Fission yeast</name>
    <dbReference type="NCBI Taxonomy" id="284812"/>
    <lineage>
        <taxon>Eukaryota</taxon>
        <taxon>Fungi</taxon>
        <taxon>Dikarya</taxon>
        <taxon>Ascomycota</taxon>
        <taxon>Taphrinomycotina</taxon>
        <taxon>Schizosaccharomycetes</taxon>
        <taxon>Schizosaccharomycetales</taxon>
        <taxon>Schizosaccharomycetaceae</taxon>
        <taxon>Schizosaccharomyces</taxon>
    </lineage>
</organism>
<proteinExistence type="evidence at protein level"/>
<sequence length="357" mass="38550">MAIKKVGILGATGTVGQRFITLLSDHPEFKIAVLGASARSAGKPYAVATKWKQSIAMPKEISQMSVKACDPKEFSECDIVFSGLDADFAGEIEKSFRDANLVIVSNAKNYRREPTVPLVVPTVNTDHLDVIKYQRQENKLDRGCIITNSNCSTAAVVVPLKALQDAFGPIAQTNVVSMQAISGAGYPGVSSLDILDNIVPFIGGEEEKIEWETRKILGSVNSTISGYELTDNVVSAQCNRVPVIDGHLMCISVKFAKTSPTPDQVREVLANYVSEPQKLGCYSAPKQAIYVFDDSTPDRPQPRLDRNNENGYAVSVGRIRSDSIFDIKFVSLVHNTVLGAAGAGILNAEVAVKKGLM</sequence>
<protein>
    <recommendedName>
        <fullName evidence="8">Aspartate-semialdehyde dehydrogenase</fullName>
        <shortName>ASA dehydrogenase</shortName>
        <shortName>ASADH</shortName>
        <ecNumber evidence="4">1.2.1.11</ecNumber>
    </recommendedName>
    <alternativeName>
        <fullName>Aspartate-beta-semialdehyde dehydrogenase</fullName>
    </alternativeName>
</protein>
<comment type="function">
    <text evidence="4">Catalyzes the NADPH-dependent formation of L-aspartate 4-semialdehyde (L-ASA) by the reductive dephosphorylation of 4-phospho-L-aspartate (By similarity). Mediates the second step in the biosynthesis of amino acids that derive from aspartate (the aspartate family of amino acids), including methioinine and threonine, the latter of which is a precursor to isoleucine (By similarity).</text>
</comment>
<comment type="catalytic activity">
    <reaction evidence="4">
        <text>L-aspartate 4-semialdehyde + phosphate + NADP(+) = 4-phospho-L-aspartate + NADPH + H(+)</text>
        <dbReference type="Rhea" id="RHEA:24284"/>
        <dbReference type="ChEBI" id="CHEBI:15378"/>
        <dbReference type="ChEBI" id="CHEBI:43474"/>
        <dbReference type="ChEBI" id="CHEBI:57535"/>
        <dbReference type="ChEBI" id="CHEBI:57783"/>
        <dbReference type="ChEBI" id="CHEBI:58349"/>
        <dbReference type="ChEBI" id="CHEBI:537519"/>
        <dbReference type="EC" id="1.2.1.11"/>
    </reaction>
    <physiologicalReaction direction="right-to-left" evidence="4">
        <dbReference type="Rhea" id="RHEA:24286"/>
    </physiologicalReaction>
</comment>
<comment type="pathway">
    <text evidence="4">Amino-acid biosynthesis; L-methionine biosynthesis via de novo pathway; L-homoserine from L-aspartate: step 2/3.</text>
</comment>
<comment type="pathway">
    <text evidence="4">Amino-acid biosynthesis; L-threonine biosynthesis; L-threonine from L-aspartate: step 2/5.</text>
</comment>
<comment type="subcellular location">
    <subcellularLocation>
        <location evidence="6">Cytoplasm</location>
        <location evidence="6">Cytosol</location>
    </subcellularLocation>
    <subcellularLocation>
        <location evidence="6">Nucleus</location>
    </subcellularLocation>
</comment>
<comment type="similarity">
    <text evidence="8">Belongs to the aspartate-semialdehyde dehydrogenase family.</text>
</comment>